<comment type="function">
    <text evidence="1">One of the primary rRNA binding proteins, it binds directly to 16S rRNA central domain where it helps coordinate assembly of the platform of the 30S subunit.</text>
</comment>
<comment type="subunit">
    <text evidence="1">Part of the 30S ribosomal subunit. Contacts proteins S5 and S12.</text>
</comment>
<comment type="similarity">
    <text evidence="1">Belongs to the universal ribosomal protein uS8 family.</text>
</comment>
<protein>
    <recommendedName>
        <fullName evidence="1">Small ribosomal subunit protein uS8</fullName>
    </recommendedName>
    <alternativeName>
        <fullName evidence="2">30S ribosomal protein S8</fullName>
    </alternativeName>
</protein>
<reference key="1">
    <citation type="journal article" date="2015" name="Genome Announc.">
        <title>Complete genome sequence of Anaeromyxobacter sp. Fw109-5, an anaerobic, metal-reducing bacterium isolated from a contaminated subsurface environment.</title>
        <authorList>
            <person name="Hwang C."/>
            <person name="Copeland A."/>
            <person name="Lucas S."/>
            <person name="Lapidus A."/>
            <person name="Barry K."/>
            <person name="Glavina Del Rio T."/>
            <person name="Dalin E."/>
            <person name="Tice H."/>
            <person name="Pitluck S."/>
            <person name="Sims D."/>
            <person name="Brettin T."/>
            <person name="Bruce D.C."/>
            <person name="Detter J.C."/>
            <person name="Han C.S."/>
            <person name="Schmutz J."/>
            <person name="Larimer F.W."/>
            <person name="Land M.L."/>
            <person name="Hauser L.J."/>
            <person name="Kyrpides N."/>
            <person name="Lykidis A."/>
            <person name="Richardson P."/>
            <person name="Belieav A."/>
            <person name="Sanford R.A."/>
            <person name="Loeffler F.E."/>
            <person name="Fields M.W."/>
        </authorList>
    </citation>
    <scope>NUCLEOTIDE SEQUENCE [LARGE SCALE GENOMIC DNA]</scope>
    <source>
        <strain>Fw109-5</strain>
    </source>
</reference>
<proteinExistence type="inferred from homology"/>
<keyword id="KW-1185">Reference proteome</keyword>
<keyword id="KW-0687">Ribonucleoprotein</keyword>
<keyword id="KW-0689">Ribosomal protein</keyword>
<keyword id="KW-0694">RNA-binding</keyword>
<keyword id="KW-0699">rRNA-binding</keyword>
<accession>A7HBN2</accession>
<organism>
    <name type="scientific">Anaeromyxobacter sp. (strain Fw109-5)</name>
    <dbReference type="NCBI Taxonomy" id="404589"/>
    <lineage>
        <taxon>Bacteria</taxon>
        <taxon>Pseudomonadati</taxon>
        <taxon>Myxococcota</taxon>
        <taxon>Myxococcia</taxon>
        <taxon>Myxococcales</taxon>
        <taxon>Cystobacterineae</taxon>
        <taxon>Anaeromyxobacteraceae</taxon>
        <taxon>Anaeromyxobacter</taxon>
    </lineage>
</organism>
<sequence>MSFTDPIGDMLTRIRNASNARHEKVLVPASRLKVRIAEVLRDEGFIKDFVRHEDGPQGAITIVLKYSGDREPAISDIKRVSKPGLRRYVPTDSIPRVLNGMGIAILSTSKGVMVDREARKQKVGGELICTVW</sequence>
<gene>
    <name evidence="1" type="primary">rpsH</name>
    <name type="ordered locus">Anae109_1925</name>
</gene>
<name>RS8_ANADF</name>
<dbReference type="EMBL" id="CP000769">
    <property type="protein sequence ID" value="ABS26128.1"/>
    <property type="molecule type" value="Genomic_DNA"/>
</dbReference>
<dbReference type="RefSeq" id="WP_012096707.1">
    <property type="nucleotide sequence ID" value="NC_009675.1"/>
</dbReference>
<dbReference type="SMR" id="A7HBN2"/>
<dbReference type="STRING" id="404589.Anae109_1925"/>
<dbReference type="KEGG" id="afw:Anae109_1925"/>
<dbReference type="eggNOG" id="COG0096">
    <property type="taxonomic scope" value="Bacteria"/>
</dbReference>
<dbReference type="HOGENOM" id="CLU_098428_0_2_7"/>
<dbReference type="OrthoDB" id="9802617at2"/>
<dbReference type="Proteomes" id="UP000006382">
    <property type="component" value="Chromosome"/>
</dbReference>
<dbReference type="GO" id="GO:1990904">
    <property type="term" value="C:ribonucleoprotein complex"/>
    <property type="evidence" value="ECO:0007669"/>
    <property type="project" value="UniProtKB-KW"/>
</dbReference>
<dbReference type="GO" id="GO:0005840">
    <property type="term" value="C:ribosome"/>
    <property type="evidence" value="ECO:0007669"/>
    <property type="project" value="UniProtKB-KW"/>
</dbReference>
<dbReference type="GO" id="GO:0019843">
    <property type="term" value="F:rRNA binding"/>
    <property type="evidence" value="ECO:0007669"/>
    <property type="project" value="UniProtKB-UniRule"/>
</dbReference>
<dbReference type="GO" id="GO:0003735">
    <property type="term" value="F:structural constituent of ribosome"/>
    <property type="evidence" value="ECO:0007669"/>
    <property type="project" value="InterPro"/>
</dbReference>
<dbReference type="GO" id="GO:0006412">
    <property type="term" value="P:translation"/>
    <property type="evidence" value="ECO:0007669"/>
    <property type="project" value="UniProtKB-UniRule"/>
</dbReference>
<dbReference type="FunFam" id="3.30.1370.30:FF:000002">
    <property type="entry name" value="30S ribosomal protein S8"/>
    <property type="match status" value="1"/>
</dbReference>
<dbReference type="FunFam" id="3.30.1490.10:FF:000001">
    <property type="entry name" value="30S ribosomal protein S8"/>
    <property type="match status" value="1"/>
</dbReference>
<dbReference type="Gene3D" id="3.30.1370.30">
    <property type="match status" value="1"/>
</dbReference>
<dbReference type="Gene3D" id="3.30.1490.10">
    <property type="match status" value="1"/>
</dbReference>
<dbReference type="HAMAP" id="MF_01302_B">
    <property type="entry name" value="Ribosomal_uS8_B"/>
    <property type="match status" value="1"/>
</dbReference>
<dbReference type="InterPro" id="IPR000630">
    <property type="entry name" value="Ribosomal_uS8"/>
</dbReference>
<dbReference type="InterPro" id="IPR047863">
    <property type="entry name" value="Ribosomal_uS8_CS"/>
</dbReference>
<dbReference type="InterPro" id="IPR035987">
    <property type="entry name" value="Ribosomal_uS8_sf"/>
</dbReference>
<dbReference type="NCBIfam" id="NF001109">
    <property type="entry name" value="PRK00136.1"/>
    <property type="match status" value="1"/>
</dbReference>
<dbReference type="PANTHER" id="PTHR11758">
    <property type="entry name" value="40S RIBOSOMAL PROTEIN S15A"/>
    <property type="match status" value="1"/>
</dbReference>
<dbReference type="Pfam" id="PF00410">
    <property type="entry name" value="Ribosomal_S8"/>
    <property type="match status" value="1"/>
</dbReference>
<dbReference type="SUPFAM" id="SSF56047">
    <property type="entry name" value="Ribosomal protein S8"/>
    <property type="match status" value="1"/>
</dbReference>
<dbReference type="PROSITE" id="PS00053">
    <property type="entry name" value="RIBOSOMAL_S8"/>
    <property type="match status" value="1"/>
</dbReference>
<feature type="chain" id="PRO_1000051765" description="Small ribosomal subunit protein uS8">
    <location>
        <begin position="1"/>
        <end position="132"/>
    </location>
</feature>
<evidence type="ECO:0000255" key="1">
    <source>
        <dbReference type="HAMAP-Rule" id="MF_01302"/>
    </source>
</evidence>
<evidence type="ECO:0000305" key="2"/>